<dbReference type="EC" id="1.2.4.2"/>
<dbReference type="EMBL" id="FO081256">
    <property type="protein sequence ID" value="CCD70240.1"/>
    <property type="molecule type" value="Genomic_DNA"/>
</dbReference>
<dbReference type="PIR" id="T15098">
    <property type="entry name" value="T15098"/>
</dbReference>
<dbReference type="RefSeq" id="NP_500617.1">
    <property type="nucleotide sequence ID" value="NM_068216.6"/>
</dbReference>
<dbReference type="SMR" id="O61199"/>
<dbReference type="BioGRID" id="42364">
    <property type="interactions" value="7"/>
</dbReference>
<dbReference type="FunCoup" id="O61199">
    <property type="interactions" value="1790"/>
</dbReference>
<dbReference type="IntAct" id="O61199">
    <property type="interactions" value="1"/>
</dbReference>
<dbReference type="STRING" id="6239.T22B11.5a.1"/>
<dbReference type="iPTMnet" id="O61199"/>
<dbReference type="PaxDb" id="6239-T22B11.5a"/>
<dbReference type="PeptideAtlas" id="O61199"/>
<dbReference type="EnsemblMetazoa" id="T22B11.5a.1">
    <property type="protein sequence ID" value="T22B11.5a.1"/>
    <property type="gene ID" value="WBGene00020679"/>
</dbReference>
<dbReference type="GeneID" id="177235"/>
<dbReference type="KEGG" id="cel:CELE_T22B11.5"/>
<dbReference type="UCSC" id="T22B11.5">
    <property type="organism name" value="c. elegans"/>
</dbReference>
<dbReference type="AGR" id="WB:WBGene00020679"/>
<dbReference type="CTD" id="177235"/>
<dbReference type="WormBase" id="T22B11.5a">
    <property type="protein sequence ID" value="CE28486"/>
    <property type="gene ID" value="WBGene00020679"/>
    <property type="gene designation" value="ogdh-1"/>
</dbReference>
<dbReference type="eggNOG" id="KOG0450">
    <property type="taxonomic scope" value="Eukaryota"/>
</dbReference>
<dbReference type="HOGENOM" id="CLU_004709_1_1_1"/>
<dbReference type="InParanoid" id="O61199"/>
<dbReference type="OMA" id="RDSYCRT"/>
<dbReference type="OrthoDB" id="413077at2759"/>
<dbReference type="PhylomeDB" id="O61199"/>
<dbReference type="Reactome" id="R-CEL-6783984">
    <property type="pathway name" value="Glycine degradation"/>
</dbReference>
<dbReference type="Reactome" id="R-CEL-9837999">
    <property type="pathway name" value="Mitochondrial protein degradation"/>
</dbReference>
<dbReference type="Reactome" id="R-CEL-9853506">
    <property type="pathway name" value="OGDH complex synthesizes succinyl-CoA from 2-OG"/>
</dbReference>
<dbReference type="PRO" id="PR:O61199"/>
<dbReference type="Proteomes" id="UP000001940">
    <property type="component" value="Chromosome IV"/>
</dbReference>
<dbReference type="Bgee" id="WBGene00020679">
    <property type="expression patterns" value="Expressed in larva and 4 other cell types or tissues"/>
</dbReference>
<dbReference type="ExpressionAtlas" id="O61199">
    <property type="expression patterns" value="baseline and differential"/>
</dbReference>
<dbReference type="GO" id="GO:0005759">
    <property type="term" value="C:mitochondrial matrix"/>
    <property type="evidence" value="ECO:0007669"/>
    <property type="project" value="UniProtKB-SubCell"/>
</dbReference>
<dbReference type="GO" id="GO:0031966">
    <property type="term" value="C:mitochondrial membrane"/>
    <property type="evidence" value="ECO:0000250"/>
    <property type="project" value="UniProtKB"/>
</dbReference>
<dbReference type="GO" id="GO:0005739">
    <property type="term" value="C:mitochondrion"/>
    <property type="evidence" value="ECO:0007005"/>
    <property type="project" value="WormBase"/>
</dbReference>
<dbReference type="GO" id="GO:0045252">
    <property type="term" value="C:oxoglutarate dehydrogenase complex"/>
    <property type="evidence" value="ECO:0000318"/>
    <property type="project" value="GO_Central"/>
</dbReference>
<dbReference type="GO" id="GO:0046872">
    <property type="term" value="F:metal ion binding"/>
    <property type="evidence" value="ECO:0007669"/>
    <property type="project" value="UniProtKB-KW"/>
</dbReference>
<dbReference type="GO" id="GO:0004591">
    <property type="term" value="F:oxoglutarate dehydrogenase (succinyl-transferring) activity"/>
    <property type="evidence" value="ECO:0000250"/>
    <property type="project" value="UniProtKB"/>
</dbReference>
<dbReference type="GO" id="GO:0030976">
    <property type="term" value="F:thiamine pyrophosphate binding"/>
    <property type="evidence" value="ECO:0007669"/>
    <property type="project" value="InterPro"/>
</dbReference>
<dbReference type="GO" id="GO:0006091">
    <property type="term" value="P:generation of precursor metabolites and energy"/>
    <property type="evidence" value="ECO:0000250"/>
    <property type="project" value="UniProtKB"/>
</dbReference>
<dbReference type="GO" id="GO:0006096">
    <property type="term" value="P:glycolytic process"/>
    <property type="evidence" value="ECO:0007669"/>
    <property type="project" value="UniProtKB-KW"/>
</dbReference>
<dbReference type="GO" id="GO:0006457">
    <property type="term" value="P:protein folding"/>
    <property type="evidence" value="ECO:0000315"/>
    <property type="project" value="WormBase"/>
</dbReference>
<dbReference type="GO" id="GO:0006099">
    <property type="term" value="P:tricarboxylic acid cycle"/>
    <property type="evidence" value="ECO:0000318"/>
    <property type="project" value="GO_Central"/>
</dbReference>
<dbReference type="CDD" id="cd02016">
    <property type="entry name" value="TPP_E1_OGDC_like"/>
    <property type="match status" value="1"/>
</dbReference>
<dbReference type="FunFam" id="1.10.287.1150:FF:000002">
    <property type="entry name" value="2-oxoglutarate dehydrogenase E1 component"/>
    <property type="match status" value="1"/>
</dbReference>
<dbReference type="FunFam" id="3.40.50.12470:FF:000007">
    <property type="entry name" value="2-oxoglutarate dehydrogenase e1 mitochondrial"/>
    <property type="match status" value="1"/>
</dbReference>
<dbReference type="FunFam" id="3.40.50.970:FF:000063">
    <property type="entry name" value="2-oxoglutarate dehydrogenase, mitochondrial"/>
    <property type="match status" value="1"/>
</dbReference>
<dbReference type="Gene3D" id="3.40.50.12470">
    <property type="match status" value="1"/>
</dbReference>
<dbReference type="Gene3D" id="3.40.50.970">
    <property type="match status" value="1"/>
</dbReference>
<dbReference type="Gene3D" id="3.40.50.11610">
    <property type="entry name" value="Multifunctional 2-oxoglutarate metabolism enzyme, C-terminal domain"/>
    <property type="match status" value="1"/>
</dbReference>
<dbReference type="Gene3D" id="1.10.287.1150">
    <property type="entry name" value="TPP helical domain"/>
    <property type="match status" value="1"/>
</dbReference>
<dbReference type="InterPro" id="IPR032106">
    <property type="entry name" value="2-oxogl_dehyd_N"/>
</dbReference>
<dbReference type="InterPro" id="IPR011603">
    <property type="entry name" value="2oxoglutarate_DH_E1"/>
</dbReference>
<dbReference type="InterPro" id="IPR001017">
    <property type="entry name" value="DH_E1"/>
</dbReference>
<dbReference type="InterPro" id="IPR042179">
    <property type="entry name" value="KGD_C_sf"/>
</dbReference>
<dbReference type="InterPro" id="IPR031717">
    <property type="entry name" value="ODO-1/KGD_C"/>
</dbReference>
<dbReference type="InterPro" id="IPR029061">
    <property type="entry name" value="THDP-binding"/>
</dbReference>
<dbReference type="InterPro" id="IPR005475">
    <property type="entry name" value="Transketolase-like_Pyr-bd"/>
</dbReference>
<dbReference type="NCBIfam" id="TIGR00239">
    <property type="entry name" value="2oxo_dh_E1"/>
    <property type="match status" value="1"/>
</dbReference>
<dbReference type="NCBIfam" id="NF006914">
    <property type="entry name" value="PRK09404.1"/>
    <property type="match status" value="1"/>
</dbReference>
<dbReference type="PANTHER" id="PTHR23152:SF4">
    <property type="entry name" value="2-OXOADIPATE DEHYDROGENASE COMPLEX COMPONENT E1"/>
    <property type="match status" value="1"/>
</dbReference>
<dbReference type="PANTHER" id="PTHR23152">
    <property type="entry name" value="2-OXOGLUTARATE DEHYDROGENASE"/>
    <property type="match status" value="1"/>
</dbReference>
<dbReference type="Pfam" id="PF16078">
    <property type="entry name" value="2-oxogl_dehyd_N"/>
    <property type="match status" value="1"/>
</dbReference>
<dbReference type="Pfam" id="PF00676">
    <property type="entry name" value="E1_dh"/>
    <property type="match status" value="1"/>
</dbReference>
<dbReference type="Pfam" id="PF16870">
    <property type="entry name" value="OxoGdeHyase_C"/>
    <property type="match status" value="1"/>
</dbReference>
<dbReference type="Pfam" id="PF02779">
    <property type="entry name" value="Transket_pyr"/>
    <property type="match status" value="1"/>
</dbReference>
<dbReference type="PIRSF" id="PIRSF000157">
    <property type="entry name" value="Oxoglu_dh_E1"/>
    <property type="match status" value="1"/>
</dbReference>
<dbReference type="SMART" id="SM00861">
    <property type="entry name" value="Transket_pyr"/>
    <property type="match status" value="1"/>
</dbReference>
<dbReference type="SUPFAM" id="SSF52518">
    <property type="entry name" value="Thiamin diphosphate-binding fold (THDP-binding)"/>
    <property type="match status" value="2"/>
</dbReference>
<evidence type="ECO:0000250" key="1"/>
<evidence type="ECO:0000250" key="2">
    <source>
        <dbReference type="UniProtKB" id="Q02218"/>
    </source>
</evidence>
<evidence type="ECO:0000255" key="3"/>
<evidence type="ECO:0000305" key="4"/>
<sequence length="1029" mass="115661">MHRASLICRLASPSRINAIRNASSGKSHISASTLVQHRNQSVAAAVKHEPFLNGSSSIYIEQMYEAWLQDPSSVHTSWDAYFRNVEAGAGPGQAFQAPPATAYAGALGVSPAAAQVTTSSAPATRLDTNASVQSISDHLKIQLLIRSYQTRGHNIADLDPLGINSADLDDTIPPELELSFYGLGERDLDREFLLPPTTFISEKKSLTLREILQRLKDIYCTSTGVEYMHLNNLEQQDWIRRRFEAPRVTELSHDQKKVLFKRLIRSTKFEEFLAKKWPSEKRFGLEGCEVLIPAMKQVIDSSSTLGVDSFVIGMPHRGRLNVLANVCRQPLATILSQFSTLEPADEGSGDVKYHLGVCIERLNRQSQKNVKIAVVANPSHLEAVDPVVMGKVRAEAFYAGDEKCDRTMAILLHGDAAFAGQGVVLETFNLDDLPSYTTHGAIHIVVNNQIGFTTDPRSSRSSPYCTDVGRVVGCPIFHVNVDDPEAVMHVCNVAADWRKTFKKDVIVDLVCYRRHGHNELDEPMFTQPLMYQRIKQTKTALEKYQEKILNEGVANEQYVKEELTKYGSILEDAYENAQKVTYVRNRDWLDSPWDDFFKKRDPLKLPSTGIEQENIEQIIGKFSQYPEGFNLHRGLERTLKGRQQMLKDNSLDWACGEALAFGSLLKEGIHVRLSGQDVQRGTFSHRHHVLHDQKVDQKIYNPLNDLSEGQGEYTVCNSSLSEYAVLGFELGYSMVDPNSLVIWEAQFGDFSNTAQCIIDQFISSGQSKWIRQSGLVMLLPHGYEGMGPEHSSARPERFLQMCNEDDEIDLEKIAFEGTFEAQQLHDTNWIVANCTTPANIYHLLRRQVTMPFRKPAVVFSPKSLLRHPMARSPVEDFQSGSNFQRVIPETGAPSQNPPDVKRVVFCTGKVYYDMVAARKHVGKENDVALVRVEQLSPFPYDLVQQECRKYQGAEILWAQEEHKNMGAWSFVQPRINSLLSIDGRATKYAGRLPSSSPATGNKFTHMQEQKEMMSKVFGVPKSKLEGFKA</sequence>
<proteinExistence type="evidence at protein level"/>
<feature type="transit peptide" description="Mitochondrion" evidence="3">
    <location>
        <begin position="1"/>
        <end status="unknown"/>
    </location>
</feature>
<feature type="chain" id="PRO_0000234100" description="2-oxoglutarate dehydrogenase, mitochondrial">
    <location>
        <begin status="unknown"/>
        <end position="1029"/>
    </location>
</feature>
<feature type="binding site" evidence="2">
    <location>
        <position position="317"/>
    </location>
    <ligand>
        <name>thiamine diphosphate</name>
        <dbReference type="ChEBI" id="CHEBI:58937"/>
    </ligand>
</feature>
<feature type="binding site" evidence="2">
    <location>
        <position position="415"/>
    </location>
    <ligand>
        <name>Mg(2+)</name>
        <dbReference type="ChEBI" id="CHEBI:18420"/>
    </ligand>
</feature>
<feature type="binding site" evidence="2">
    <location>
        <position position="415"/>
    </location>
    <ligand>
        <name>thiamine diphosphate</name>
        <dbReference type="ChEBI" id="CHEBI:58937"/>
    </ligand>
</feature>
<feature type="binding site" evidence="2">
    <location>
        <position position="448"/>
    </location>
    <ligand>
        <name>Mg(2+)</name>
        <dbReference type="ChEBI" id="CHEBI:18420"/>
    </ligand>
</feature>
<feature type="binding site" evidence="2">
    <location>
        <position position="448"/>
    </location>
    <ligand>
        <name>thiamine diphosphate</name>
        <dbReference type="ChEBI" id="CHEBI:58937"/>
    </ligand>
</feature>
<feature type="binding site" evidence="2">
    <location>
        <position position="450"/>
    </location>
    <ligand>
        <name>Mg(2+)</name>
        <dbReference type="ChEBI" id="CHEBI:18420"/>
    </ligand>
</feature>
<feature type="binding site" evidence="2">
    <location>
        <position position="450"/>
    </location>
    <ligand>
        <name>thiamine diphosphate</name>
        <dbReference type="ChEBI" id="CHEBI:58937"/>
    </ligand>
</feature>
<feature type="binding site" evidence="2">
    <location>
        <position position="676"/>
    </location>
    <ligand>
        <name>thiamine diphosphate</name>
        <dbReference type="ChEBI" id="CHEBI:58937"/>
    </ligand>
</feature>
<organism>
    <name type="scientific">Caenorhabditis elegans</name>
    <dbReference type="NCBI Taxonomy" id="6239"/>
    <lineage>
        <taxon>Eukaryota</taxon>
        <taxon>Metazoa</taxon>
        <taxon>Ecdysozoa</taxon>
        <taxon>Nematoda</taxon>
        <taxon>Chromadorea</taxon>
        <taxon>Rhabditida</taxon>
        <taxon>Rhabditina</taxon>
        <taxon>Rhabditomorpha</taxon>
        <taxon>Rhabditoidea</taxon>
        <taxon>Rhabditidae</taxon>
        <taxon>Peloderinae</taxon>
        <taxon>Caenorhabditis</taxon>
    </lineage>
</organism>
<keyword id="KW-0903">Direct protein sequencing</keyword>
<keyword id="KW-0324">Glycolysis</keyword>
<keyword id="KW-0460">Magnesium</keyword>
<keyword id="KW-0479">Metal-binding</keyword>
<keyword id="KW-0496">Mitochondrion</keyword>
<keyword id="KW-0560">Oxidoreductase</keyword>
<keyword id="KW-1185">Reference proteome</keyword>
<keyword id="KW-0786">Thiamine pyrophosphate</keyword>
<keyword id="KW-0809">Transit peptide</keyword>
<accession>O61199</accession>
<gene>
    <name type="primary">ogdh-1</name>
    <name type="ORF">T22B11.5</name>
</gene>
<reference key="1">
    <citation type="journal article" date="1998" name="Science">
        <title>Genome sequence of the nematode C. elegans: a platform for investigating biology.</title>
        <authorList>
            <consortium name="The C. elegans sequencing consortium"/>
        </authorList>
    </citation>
    <scope>NUCLEOTIDE SEQUENCE [LARGE SCALE GENOMIC DNA]</scope>
    <source>
        <strain>Bristol N2</strain>
    </source>
</reference>
<reference key="2">
    <citation type="submission" date="2006-03" db="UniProtKB">
        <authorList>
            <person name="Bienvenut W.V."/>
        </authorList>
    </citation>
    <scope>PROTEIN SEQUENCE OF 126-146; 297-317; 320-328; 372-391; 504-514; 548-565; 622-633; 673-680; 910-918; 975-984 AND 992-1002</scope>
    <scope>IDENTIFICATION BY MASS SPECTROMETRY</scope>
</reference>
<protein>
    <recommendedName>
        <fullName>2-oxoglutarate dehydrogenase, mitochondrial</fullName>
        <ecNumber>1.2.4.2</ecNumber>
    </recommendedName>
    <alternativeName>
        <fullName>2-oxoglutarate dehydrogenase complex component E1</fullName>
        <shortName>OGDC-E1</shortName>
    </alternativeName>
    <alternativeName>
        <fullName>Alpha-ketoglutarate dehydrogenase</fullName>
    </alternativeName>
</protein>
<comment type="function">
    <text evidence="2">The 2-oxoglutarate dehydrogenase complex catalyzes the overall conversion of 2-oxoglutarate to succinyl-CoA and CO(2). It contains multiple copies of three enzymatic components: 2-oxoglutarate dehydrogenase (E1), dihydrolipoamide succinyltransferase (E2) and lipoamide dehydrogenase (E3) (By similarity).</text>
</comment>
<comment type="catalytic activity">
    <reaction evidence="2">
        <text>N(6)-[(R)-lipoyl]-L-lysyl-[protein] + 2-oxoglutarate + H(+) = N(6)-[(R)-S(8)-succinyldihydrolipoyl]-L-lysyl-[protein] + CO2</text>
        <dbReference type="Rhea" id="RHEA:12188"/>
        <dbReference type="Rhea" id="RHEA-COMP:10474"/>
        <dbReference type="Rhea" id="RHEA-COMP:20092"/>
        <dbReference type="ChEBI" id="CHEBI:15378"/>
        <dbReference type="ChEBI" id="CHEBI:16526"/>
        <dbReference type="ChEBI" id="CHEBI:16810"/>
        <dbReference type="ChEBI" id="CHEBI:83099"/>
        <dbReference type="ChEBI" id="CHEBI:83120"/>
        <dbReference type="EC" id="1.2.4.2"/>
    </reaction>
</comment>
<comment type="cofactor">
    <cofactor evidence="2">
        <name>thiamine diphosphate</name>
        <dbReference type="ChEBI" id="CHEBI:58937"/>
    </cofactor>
    <cofactor evidence="2">
        <name>Mg(2+)</name>
        <dbReference type="ChEBI" id="CHEBI:18420"/>
    </cofactor>
</comment>
<comment type="subunit">
    <text evidence="2">Homodimer (By similarity). Component of the 2-oxoglutarate dehydrogenase complex (By similarity).</text>
</comment>
<comment type="subcellular location">
    <subcellularLocation>
        <location evidence="1">Mitochondrion matrix</location>
    </subcellularLocation>
</comment>
<comment type="similarity">
    <text evidence="4">Belongs to the alpha-ketoglutarate dehydrogenase family.</text>
</comment>
<name>ODO1_CAEEL</name>